<organism>
    <name type="scientific">Symbiobacterium thermophilum (strain DSM 24528 / JCM 14929 / IAM 14863 / T)</name>
    <dbReference type="NCBI Taxonomy" id="292459"/>
    <lineage>
        <taxon>Bacteria</taxon>
        <taxon>Bacillati</taxon>
        <taxon>Bacillota</taxon>
        <taxon>Clostridia</taxon>
        <taxon>Eubacteriales</taxon>
        <taxon>Symbiobacteriaceae</taxon>
        <taxon>Symbiobacterium</taxon>
    </lineage>
</organism>
<feature type="chain" id="PRO_0000182546" description="Heat-inducible transcription repressor HrcA">
    <location>
        <begin position="1"/>
        <end position="341"/>
    </location>
</feature>
<gene>
    <name evidence="1" type="primary">hrcA</name>
    <name type="ordered locus">STH502</name>
</gene>
<sequence length="341" mass="38714">MIDDRKNKVLQAIIEDYVATAEPVGSRTIARKYNLGVSPATIRNEMSDLEELGYLEQPHTSAGRIPSNLGYRYYVDCLMPERPINPAEQELIRSTFQRKIRELDTLVRETARLLSETTHLTAVISGPQFEKAVFKEIRIVPLGNDRALLIYITDSGLVENQVVEVPLQVTMLELQQVAELLSEHLRGRRVETLSRTALQSLHRELSRYGTLLEQALHFLEQKLEPGDRHRLYFGGTSHMLDQPEFRDVQKLRGVLSFLEQEEAVAAVLGLDRLTEGVEIQIGEEIRLRELADCSVVTATYRVGDRIIGKMGVIGPRRMEYPKVVSILNAIASHLSEMNRLF</sequence>
<comment type="function">
    <text evidence="1">Negative regulator of class I heat shock genes (grpE-dnaK-dnaJ and groELS operons). Prevents heat-shock induction of these operons.</text>
</comment>
<comment type="similarity">
    <text evidence="1">Belongs to the HrcA family.</text>
</comment>
<reference key="1">
    <citation type="journal article" date="2004" name="Nucleic Acids Res.">
        <title>Genome sequence of Symbiobacterium thermophilum, an uncultivable bacterium that depends on microbial commensalism.</title>
        <authorList>
            <person name="Ueda K."/>
            <person name="Yamashita A."/>
            <person name="Ishikawa J."/>
            <person name="Shimada M."/>
            <person name="Watsuji T."/>
            <person name="Morimura K."/>
            <person name="Ikeda H."/>
            <person name="Hattori M."/>
            <person name="Beppu T."/>
        </authorList>
    </citation>
    <scope>NUCLEOTIDE SEQUENCE [LARGE SCALE GENOMIC DNA]</scope>
    <source>
        <strain>DSM 24528 / JCM 14929 / IAM 14863 / T</strain>
    </source>
</reference>
<protein>
    <recommendedName>
        <fullName evidence="1">Heat-inducible transcription repressor HrcA</fullName>
    </recommendedName>
</protein>
<proteinExistence type="inferred from homology"/>
<evidence type="ECO:0000255" key="1">
    <source>
        <dbReference type="HAMAP-Rule" id="MF_00081"/>
    </source>
</evidence>
<keyword id="KW-1185">Reference proteome</keyword>
<keyword id="KW-0678">Repressor</keyword>
<keyword id="KW-0346">Stress response</keyword>
<keyword id="KW-0804">Transcription</keyword>
<keyword id="KW-0805">Transcription regulation</keyword>
<name>HRCA_SYMTH</name>
<accession>Q67S56</accession>
<dbReference type="EMBL" id="AP006840">
    <property type="protein sequence ID" value="BAD39487.1"/>
    <property type="molecule type" value="Genomic_DNA"/>
</dbReference>
<dbReference type="RefSeq" id="WP_011194636.1">
    <property type="nucleotide sequence ID" value="NC_006177.1"/>
</dbReference>
<dbReference type="SMR" id="Q67S56"/>
<dbReference type="STRING" id="292459.STH502"/>
<dbReference type="KEGG" id="sth:STH502"/>
<dbReference type="eggNOG" id="COG1420">
    <property type="taxonomic scope" value="Bacteria"/>
</dbReference>
<dbReference type="HOGENOM" id="CLU_050019_1_0_9"/>
<dbReference type="OrthoDB" id="9783139at2"/>
<dbReference type="Proteomes" id="UP000000417">
    <property type="component" value="Chromosome"/>
</dbReference>
<dbReference type="GO" id="GO:0003677">
    <property type="term" value="F:DNA binding"/>
    <property type="evidence" value="ECO:0007669"/>
    <property type="project" value="InterPro"/>
</dbReference>
<dbReference type="GO" id="GO:0045892">
    <property type="term" value="P:negative regulation of DNA-templated transcription"/>
    <property type="evidence" value="ECO:0007669"/>
    <property type="project" value="UniProtKB-UniRule"/>
</dbReference>
<dbReference type="FunFam" id="1.10.10.10:FF:000049">
    <property type="entry name" value="Heat-inducible transcription repressor HrcA"/>
    <property type="match status" value="1"/>
</dbReference>
<dbReference type="Gene3D" id="3.30.450.40">
    <property type="match status" value="1"/>
</dbReference>
<dbReference type="Gene3D" id="3.30.390.60">
    <property type="entry name" value="Heat-inducible transcription repressor hrca homolog, domain 3"/>
    <property type="match status" value="1"/>
</dbReference>
<dbReference type="Gene3D" id="1.10.10.10">
    <property type="entry name" value="Winged helix-like DNA-binding domain superfamily/Winged helix DNA-binding domain"/>
    <property type="match status" value="1"/>
</dbReference>
<dbReference type="HAMAP" id="MF_00081">
    <property type="entry name" value="HrcA"/>
    <property type="match status" value="1"/>
</dbReference>
<dbReference type="InterPro" id="IPR029016">
    <property type="entry name" value="GAF-like_dom_sf"/>
</dbReference>
<dbReference type="InterPro" id="IPR002571">
    <property type="entry name" value="HrcA"/>
</dbReference>
<dbReference type="InterPro" id="IPR021153">
    <property type="entry name" value="HrcA_C"/>
</dbReference>
<dbReference type="InterPro" id="IPR036388">
    <property type="entry name" value="WH-like_DNA-bd_sf"/>
</dbReference>
<dbReference type="InterPro" id="IPR036390">
    <property type="entry name" value="WH_DNA-bd_sf"/>
</dbReference>
<dbReference type="InterPro" id="IPR023120">
    <property type="entry name" value="WHTH_transcript_rep_HrcA_IDD"/>
</dbReference>
<dbReference type="NCBIfam" id="TIGR00331">
    <property type="entry name" value="hrcA"/>
    <property type="match status" value="1"/>
</dbReference>
<dbReference type="PANTHER" id="PTHR34824">
    <property type="entry name" value="HEAT-INDUCIBLE TRANSCRIPTION REPRESSOR HRCA"/>
    <property type="match status" value="1"/>
</dbReference>
<dbReference type="PANTHER" id="PTHR34824:SF1">
    <property type="entry name" value="HEAT-INDUCIBLE TRANSCRIPTION REPRESSOR HRCA"/>
    <property type="match status" value="1"/>
</dbReference>
<dbReference type="Pfam" id="PF01628">
    <property type="entry name" value="HrcA"/>
    <property type="match status" value="1"/>
</dbReference>
<dbReference type="PIRSF" id="PIRSF005485">
    <property type="entry name" value="HrcA"/>
    <property type="match status" value="1"/>
</dbReference>
<dbReference type="SUPFAM" id="SSF55781">
    <property type="entry name" value="GAF domain-like"/>
    <property type="match status" value="1"/>
</dbReference>
<dbReference type="SUPFAM" id="SSF46785">
    <property type="entry name" value="Winged helix' DNA-binding domain"/>
    <property type="match status" value="1"/>
</dbReference>